<keyword id="KW-0002">3D-structure</keyword>
<keyword id="KW-0007">Acetylation</keyword>
<keyword id="KW-0138">CF(0)</keyword>
<keyword id="KW-0903">Direct protein sequencing</keyword>
<keyword id="KW-0375">Hydrogen ion transport</keyword>
<keyword id="KW-0406">Ion transport</keyword>
<keyword id="KW-0472">Membrane</keyword>
<keyword id="KW-0496">Mitochondrion</keyword>
<keyword id="KW-0999">Mitochondrion inner membrane</keyword>
<keyword id="KW-0597">Phosphoprotein</keyword>
<keyword id="KW-1185">Reference proteome</keyword>
<keyword id="KW-0813">Transport</keyword>
<dbReference type="PIR" id="S00212">
    <property type="entry name" value="S00212"/>
</dbReference>
<dbReference type="PDB" id="6J5I">
    <property type="method" value="EM"/>
    <property type="resolution" value="3.34 A"/>
    <property type="chains" value="c=7-76"/>
</dbReference>
<dbReference type="PDB" id="6J5J">
    <property type="method" value="EM"/>
    <property type="resolution" value="3.45 A"/>
    <property type="chains" value="c=7-76"/>
</dbReference>
<dbReference type="PDB" id="6J5K">
    <property type="method" value="EM"/>
    <property type="resolution" value="6.20 A"/>
    <property type="chains" value="Ac/Bc/Cc/c=7-76"/>
</dbReference>
<dbReference type="PDBsum" id="6J5I"/>
<dbReference type="PDBsum" id="6J5J"/>
<dbReference type="PDBsum" id="6J5K"/>
<dbReference type="BMRB" id="P13618"/>
<dbReference type="SMR" id="P13618"/>
<dbReference type="FunCoup" id="P13618">
    <property type="interactions" value="51"/>
</dbReference>
<dbReference type="IntAct" id="P13618">
    <property type="interactions" value="1"/>
</dbReference>
<dbReference type="STRING" id="9823.ENSSSCP00000051036"/>
<dbReference type="PaxDb" id="9823-ENSSSCP00000019617"/>
<dbReference type="PeptideAtlas" id="P13618"/>
<dbReference type="eggNOG" id="KOG4634">
    <property type="taxonomic scope" value="Eukaryota"/>
</dbReference>
<dbReference type="HOGENOM" id="CLU_145649_1_0_1"/>
<dbReference type="InParanoid" id="P13618"/>
<dbReference type="Proteomes" id="UP000008227">
    <property type="component" value="Unplaced"/>
</dbReference>
<dbReference type="Proteomes" id="UP000314985">
    <property type="component" value="Unplaced"/>
</dbReference>
<dbReference type="Proteomes" id="UP000694570">
    <property type="component" value="Unplaced"/>
</dbReference>
<dbReference type="Proteomes" id="UP000694571">
    <property type="component" value="Unplaced"/>
</dbReference>
<dbReference type="Proteomes" id="UP000694720">
    <property type="component" value="Unplaced"/>
</dbReference>
<dbReference type="Proteomes" id="UP000694722">
    <property type="component" value="Unplaced"/>
</dbReference>
<dbReference type="Proteomes" id="UP000694723">
    <property type="component" value="Unplaced"/>
</dbReference>
<dbReference type="Proteomes" id="UP000694724">
    <property type="component" value="Unplaced"/>
</dbReference>
<dbReference type="Proteomes" id="UP000694725">
    <property type="component" value="Unplaced"/>
</dbReference>
<dbReference type="Proteomes" id="UP000694726">
    <property type="component" value="Unplaced"/>
</dbReference>
<dbReference type="Proteomes" id="UP000694727">
    <property type="component" value="Unplaced"/>
</dbReference>
<dbReference type="Proteomes" id="UP000694728">
    <property type="component" value="Unplaced"/>
</dbReference>
<dbReference type="GO" id="GO:0005743">
    <property type="term" value="C:mitochondrial inner membrane"/>
    <property type="evidence" value="ECO:0007669"/>
    <property type="project" value="UniProtKB-SubCell"/>
</dbReference>
<dbReference type="GO" id="GO:0045259">
    <property type="term" value="C:proton-transporting ATP synthase complex"/>
    <property type="evidence" value="ECO:0000250"/>
    <property type="project" value="UniProtKB"/>
</dbReference>
<dbReference type="GO" id="GO:0015078">
    <property type="term" value="F:proton transmembrane transporter activity"/>
    <property type="evidence" value="ECO:0007669"/>
    <property type="project" value="InterPro"/>
</dbReference>
<dbReference type="GO" id="GO:0015986">
    <property type="term" value="P:proton motive force-driven ATP synthesis"/>
    <property type="evidence" value="ECO:0007669"/>
    <property type="project" value="InterPro"/>
</dbReference>
<dbReference type="FunFam" id="1.10.246.110:FF:000001">
    <property type="entry name" value="ATP synthase-coupling factor 6, mitochondrial"/>
    <property type="match status" value="1"/>
</dbReference>
<dbReference type="Gene3D" id="1.10.246.110">
    <property type="entry name" value="Mitochondrial ATP synthase-coupling factor 6"/>
    <property type="match status" value="1"/>
</dbReference>
<dbReference type="InterPro" id="IPR008387">
    <property type="entry name" value="ATP_synth_f6_mt"/>
</dbReference>
<dbReference type="InterPro" id="IPR036204">
    <property type="entry name" value="ATP_synth_f6_sf_mt"/>
</dbReference>
<dbReference type="PANTHER" id="PTHR12441">
    <property type="entry name" value="ATP SYNTHASE COUPLING FACTOR 6, MITOCHONDRIAL"/>
    <property type="match status" value="1"/>
</dbReference>
<dbReference type="PANTHER" id="PTHR12441:SF10">
    <property type="entry name" value="ATP SYNTHASE-COUPLING FACTOR 6, MITOCHONDRIAL"/>
    <property type="match status" value="1"/>
</dbReference>
<dbReference type="Pfam" id="PF05511">
    <property type="entry name" value="ATP-synt_F6"/>
    <property type="match status" value="1"/>
</dbReference>
<dbReference type="PIRSF" id="PIRSF002455">
    <property type="entry name" value="ATP_synthase_coupling_factor_6"/>
    <property type="match status" value="1"/>
</dbReference>
<dbReference type="SUPFAM" id="SSF111357">
    <property type="entry name" value="Mitochondrial ATP synthase coupling factor 6"/>
    <property type="match status" value="1"/>
</dbReference>
<organism>
    <name type="scientific">Sus scrofa</name>
    <name type="common">Pig</name>
    <dbReference type="NCBI Taxonomy" id="9823"/>
    <lineage>
        <taxon>Eukaryota</taxon>
        <taxon>Metazoa</taxon>
        <taxon>Chordata</taxon>
        <taxon>Craniata</taxon>
        <taxon>Vertebrata</taxon>
        <taxon>Euteleostomi</taxon>
        <taxon>Mammalia</taxon>
        <taxon>Eutheria</taxon>
        <taxon>Laurasiatheria</taxon>
        <taxon>Artiodactyla</taxon>
        <taxon>Suina</taxon>
        <taxon>Suidae</taxon>
        <taxon>Sus</taxon>
    </lineage>
</organism>
<gene>
    <name evidence="2" type="primary">ATP5PF</name>
    <name type="synonym">ATP5J</name>
</gene>
<protein>
    <recommendedName>
        <fullName evidence="2">ATP synthase peripheral stalk subunit F6, mitochondrial</fullName>
        <shortName>ATPase subunit F6</shortName>
    </recommendedName>
    <alternativeName>
        <fullName evidence="6">ATP synthase peripheral stalk subunit F6</fullName>
    </alternativeName>
</protein>
<reference key="1">
    <citation type="journal article" date="1987" name="FEBS Lett.">
        <title>Isolation and structural characterization of porcine coupling factor 6 from intestinal tissues.</title>
        <authorList>
            <person name="Chen Z.-W."/>
            <person name="Mutt V."/>
            <person name="Barros-Soederling J."/>
            <person name="Joernvall H."/>
        </authorList>
    </citation>
    <scope>PROTEIN SEQUENCE</scope>
    <source>
        <tissue>Intestine</tissue>
    </source>
</reference>
<evidence type="ECO:0000250" key="1">
    <source>
        <dbReference type="UniProtKB" id="P02721"/>
    </source>
</evidence>
<evidence type="ECO:0000250" key="2">
    <source>
        <dbReference type="UniProtKB" id="P18859"/>
    </source>
</evidence>
<evidence type="ECO:0000250" key="3">
    <source>
        <dbReference type="UniProtKB" id="P19483"/>
    </source>
</evidence>
<evidence type="ECO:0000250" key="4">
    <source>
        <dbReference type="UniProtKB" id="P21571"/>
    </source>
</evidence>
<evidence type="ECO:0000250" key="5">
    <source>
        <dbReference type="UniProtKB" id="P97450"/>
    </source>
</evidence>
<evidence type="ECO:0000305" key="6"/>
<evidence type="ECO:0007829" key="7">
    <source>
        <dbReference type="PDB" id="6J5I"/>
    </source>
</evidence>
<evidence type="ECO:0007829" key="8">
    <source>
        <dbReference type="PDB" id="6J5J"/>
    </source>
</evidence>
<comment type="function">
    <text evidence="1 2 3">Subunit F6, of the mitochondrial membrane ATP synthase complex (F(1)F(0) ATP synthase or Complex V) that produces ATP from ADP in the presence of a proton gradient across the membrane which is generated by electron transport complexes of the respiratory chain. ATP synthase complex consist of a soluble F(1) head domain - the catalytic core - and a membrane F(1) domain - the membrane proton channel. These two domains are linked by a central stalk rotating inside the F(1) region and a stationary peripheral stalk. During catalysis, ATP synthesis in the catalytic domain of F(1) is coupled via a rotary mechanism of the central stalk subunits to proton translocation (By similarity). In vivo, can only synthesize ATP although its ATP hydrolase activity can be activated artificially in vitro (By similarity). Part of the complex F(0) domain (By similarity). Part of the complex F(0) domain and the peripheric stalk, which acts as a stator to hold the catalytic alpha(3)beta(3) subcomplex and subunit a/ATP6 static relative to the rotary elements (By similarity).</text>
</comment>
<comment type="subunit">
    <text evidence="2">Component of the ATP synthase complex composed at least of ATP5F1A/subunit alpha, ATP5F1B/subunit beta, ATP5MC1/subunit c (homooctomer), MT-ATP6/subunit a, MT-ATP8/subunit 8, ATP5ME/subunit e, ATP5MF/subunit f, ATP5MG/subunit g, ATP5MK/subunit k, ATP5MJ/subunit j, ATP5F1C/subunit gamma, ATP5F1D/subunit delta, ATP5F1E/subunit epsilon, ATP5PF/subunit F6, ATP5PB/subunit b, ATP5PD/subunit d, ATP5PO/subunit OSCP. ATP synthase complex consists of a soluble F(1) head domain (subunits alpha(3) and beta(3)) - the catalytic core - and a membrane F(0) domain - the membrane proton channel (subunits c, a, 8, e, f, g, k and j). These two domains are linked by a central stalk (subunits gamma, delta, and epsilon) rotating inside the F1 region and a stationary peripheral stalk (subunits F6, b, d, and OSCP).</text>
</comment>
<comment type="subcellular location">
    <subcellularLocation>
        <location>Mitochondrion</location>
    </subcellularLocation>
    <subcellularLocation>
        <location>Mitochondrion inner membrane</location>
    </subcellularLocation>
</comment>
<comment type="similarity">
    <text evidence="6">Belongs to the eukaryotic ATPase subunit F6 family.</text>
</comment>
<name>ATP5J_PIG</name>
<accession>P13618</accession>
<proteinExistence type="evidence at protein level"/>
<feature type="chain" id="PRO_0000071700" description="ATP synthase peripheral stalk subunit F6, mitochondrial">
    <location>
        <begin position="1"/>
        <end position="76"/>
    </location>
</feature>
<feature type="modified residue" description="N6-acetyllysine" evidence="2">
    <location>
        <position position="9"/>
    </location>
</feature>
<feature type="modified residue" description="N6-acetyllysine" evidence="2">
    <location>
        <position position="14"/>
    </location>
</feature>
<feature type="modified residue" description="N6-acetyllysine" evidence="5">
    <location>
        <position position="47"/>
    </location>
</feature>
<feature type="modified residue" description="N6-acetyllysine; alternate" evidence="5">
    <location>
        <position position="52"/>
    </location>
</feature>
<feature type="modified residue" description="N6-succinyllysine; alternate" evidence="5">
    <location>
        <position position="52"/>
    </location>
</feature>
<feature type="modified residue" description="N6-acetyllysine; alternate" evidence="2">
    <location>
        <position position="67"/>
    </location>
</feature>
<feature type="modified residue" description="N6-succinyllysine; alternate" evidence="5">
    <location>
        <position position="67"/>
    </location>
</feature>
<feature type="modified residue" description="N6-acetyllysine" evidence="2">
    <location>
        <position position="73"/>
    </location>
</feature>
<feature type="modified residue" description="Phosphoserine" evidence="4">
    <location>
        <position position="76"/>
    </location>
</feature>
<feature type="helix" evidence="7">
    <location>
        <begin position="8"/>
        <end position="19"/>
    </location>
</feature>
<feature type="turn" evidence="7">
    <location>
        <begin position="20"/>
        <end position="22"/>
    </location>
</feature>
<feature type="strand" evidence="7">
    <location>
        <begin position="25"/>
        <end position="27"/>
    </location>
</feature>
<feature type="turn" evidence="8">
    <location>
        <begin position="29"/>
        <end position="32"/>
    </location>
</feature>
<feature type="helix" evidence="7">
    <location>
        <begin position="34"/>
        <end position="48"/>
    </location>
</feature>
<sequence length="76" mass="8930">NKELDPVQKLFVDKIREYRTKRQTSGGPVDAGPEYQQDLDRELFKLKQMYGKADMNTFPNFTFEDPKFEAVEKPQS</sequence>